<proteinExistence type="inferred from homology"/>
<name>VRAS_STAS1</name>
<sequence>MNHYFRAIGSMLILVYSTFFAIFFIDKVFVNIMYFQGMFYTQIFGIPVLLFLNLMVILLCIIVGSVLAYKINQQNHWLKDQIERSIEGQTVGINDQNIELYNETIELYQTLVPLNQEVHKLRMKTQNLTNESYNINDVKVKKIIEDERQRLARELHDSVSQQLFAASMMLSAIKETELKAPLDQQIPVLEKMIQDSQLEMRALLLHLRPIGLKDKSLGEGIKDLVVDLQKKVPMKVVHDIEEFKVPKGIEDHLFRITQEAISNTLRHSKGTKVTIELFNREEYLLLRIQDNGKGFNVDDKVEQSYGLKNMRERALEIGATFHIVSLPDAGTRIEVKAPLNKEDSNAD</sequence>
<dbReference type="EC" id="2.7.13.3"/>
<dbReference type="EMBL" id="AP008934">
    <property type="protein sequence ID" value="BAE18053.1"/>
    <property type="molecule type" value="Genomic_DNA"/>
</dbReference>
<dbReference type="RefSeq" id="WP_011302781.1">
    <property type="nucleotide sequence ID" value="NZ_MTGA01000031.1"/>
</dbReference>
<dbReference type="SMR" id="Q49YT0"/>
<dbReference type="KEGG" id="ssp:SSP0908"/>
<dbReference type="eggNOG" id="COG4585">
    <property type="taxonomic scope" value="Bacteria"/>
</dbReference>
<dbReference type="HOGENOM" id="CLU_000445_20_12_9"/>
<dbReference type="OrthoDB" id="9795828at2"/>
<dbReference type="Proteomes" id="UP000006371">
    <property type="component" value="Chromosome"/>
</dbReference>
<dbReference type="GO" id="GO:0005886">
    <property type="term" value="C:plasma membrane"/>
    <property type="evidence" value="ECO:0007669"/>
    <property type="project" value="UniProtKB-SubCell"/>
</dbReference>
<dbReference type="GO" id="GO:0005524">
    <property type="term" value="F:ATP binding"/>
    <property type="evidence" value="ECO:0007669"/>
    <property type="project" value="UniProtKB-KW"/>
</dbReference>
<dbReference type="GO" id="GO:0000155">
    <property type="term" value="F:phosphorelay sensor kinase activity"/>
    <property type="evidence" value="ECO:0007669"/>
    <property type="project" value="InterPro"/>
</dbReference>
<dbReference type="GO" id="GO:0046983">
    <property type="term" value="F:protein dimerization activity"/>
    <property type="evidence" value="ECO:0007669"/>
    <property type="project" value="InterPro"/>
</dbReference>
<dbReference type="CDD" id="cd16917">
    <property type="entry name" value="HATPase_UhpB-NarQ-NarX-like"/>
    <property type="match status" value="1"/>
</dbReference>
<dbReference type="Gene3D" id="1.20.5.1930">
    <property type="match status" value="1"/>
</dbReference>
<dbReference type="Gene3D" id="3.30.565.10">
    <property type="entry name" value="Histidine kinase-like ATPase, C-terminal domain"/>
    <property type="match status" value="1"/>
</dbReference>
<dbReference type="InterPro" id="IPR036890">
    <property type="entry name" value="HATPase_C_sf"/>
</dbReference>
<dbReference type="InterPro" id="IPR017202">
    <property type="entry name" value="LiaS/VraS"/>
</dbReference>
<dbReference type="InterPro" id="IPR050482">
    <property type="entry name" value="Sensor_HK_TwoCompSys"/>
</dbReference>
<dbReference type="InterPro" id="IPR011712">
    <property type="entry name" value="Sig_transdc_His_kin_sub3_dim/P"/>
</dbReference>
<dbReference type="PANTHER" id="PTHR24421">
    <property type="entry name" value="NITRATE/NITRITE SENSOR PROTEIN NARX-RELATED"/>
    <property type="match status" value="1"/>
</dbReference>
<dbReference type="PANTHER" id="PTHR24421:SF37">
    <property type="entry name" value="SENSOR HISTIDINE KINASE NARS"/>
    <property type="match status" value="1"/>
</dbReference>
<dbReference type="Pfam" id="PF02518">
    <property type="entry name" value="HATPase_c"/>
    <property type="match status" value="1"/>
</dbReference>
<dbReference type="Pfam" id="PF07730">
    <property type="entry name" value="HisKA_3"/>
    <property type="match status" value="1"/>
</dbReference>
<dbReference type="PIRSF" id="PIRSF037431">
    <property type="entry name" value="STHK_LiaS"/>
    <property type="match status" value="1"/>
</dbReference>
<dbReference type="SMART" id="SM00387">
    <property type="entry name" value="HATPase_c"/>
    <property type="match status" value="1"/>
</dbReference>
<dbReference type="SUPFAM" id="SSF55874">
    <property type="entry name" value="ATPase domain of HSP90 chaperone/DNA topoisomerase II/histidine kinase"/>
    <property type="match status" value="1"/>
</dbReference>
<reference key="1">
    <citation type="journal article" date="2005" name="Proc. Natl. Acad. Sci. U.S.A.">
        <title>Whole genome sequence of Staphylococcus saprophyticus reveals the pathogenesis of uncomplicated urinary tract infection.</title>
        <authorList>
            <person name="Kuroda M."/>
            <person name="Yamashita A."/>
            <person name="Hirakawa H."/>
            <person name="Kumano M."/>
            <person name="Morikawa K."/>
            <person name="Higashide M."/>
            <person name="Maruyama A."/>
            <person name="Inose Y."/>
            <person name="Matoba K."/>
            <person name="Toh H."/>
            <person name="Kuhara S."/>
            <person name="Hattori M."/>
            <person name="Ohta T."/>
        </authorList>
    </citation>
    <scope>NUCLEOTIDE SEQUENCE [LARGE SCALE GENOMIC DNA]</scope>
    <source>
        <strain>ATCC 15305 / DSM 20229 / NCIMB 8711 / NCTC 7292 / S-41</strain>
    </source>
</reference>
<comment type="function">
    <text evidence="1">Member of the two-component regulatory system VraS/VraR involved in the control of the cell wall peptidoglycan biosynthesis. Probably activates VraR by phosphorylation (By similarity).</text>
</comment>
<comment type="catalytic activity">
    <reaction>
        <text>ATP + protein L-histidine = ADP + protein N-phospho-L-histidine.</text>
        <dbReference type="EC" id="2.7.13.3"/>
    </reaction>
</comment>
<comment type="subcellular location">
    <subcellularLocation>
        <location evidence="3">Cell membrane</location>
        <topology evidence="3">Multi-pass membrane protein</topology>
    </subcellularLocation>
</comment>
<protein>
    <recommendedName>
        <fullName>Sensor protein VraS</fullName>
        <ecNumber>2.7.13.3</ecNumber>
    </recommendedName>
</protein>
<keyword id="KW-0067">ATP-binding</keyword>
<keyword id="KW-1003">Cell membrane</keyword>
<keyword id="KW-0418">Kinase</keyword>
<keyword id="KW-0472">Membrane</keyword>
<keyword id="KW-0547">Nucleotide-binding</keyword>
<keyword id="KW-0597">Phosphoprotein</keyword>
<keyword id="KW-1185">Reference proteome</keyword>
<keyword id="KW-0808">Transferase</keyword>
<keyword id="KW-0812">Transmembrane</keyword>
<keyword id="KW-1133">Transmembrane helix</keyword>
<keyword id="KW-0902">Two-component regulatory system</keyword>
<evidence type="ECO:0000250" key="1"/>
<evidence type="ECO:0000255" key="2"/>
<evidence type="ECO:0000305" key="3"/>
<gene>
    <name type="primary">vraS</name>
    <name type="ordered locus">SSP0908</name>
</gene>
<accession>Q49YT0</accession>
<organism>
    <name type="scientific">Staphylococcus saprophyticus subsp. saprophyticus (strain ATCC 15305 / DSM 20229 / NCIMB 8711 / NCTC 7292 / S-41)</name>
    <dbReference type="NCBI Taxonomy" id="342451"/>
    <lineage>
        <taxon>Bacteria</taxon>
        <taxon>Bacillati</taxon>
        <taxon>Bacillota</taxon>
        <taxon>Bacilli</taxon>
        <taxon>Bacillales</taxon>
        <taxon>Staphylococcaceae</taxon>
        <taxon>Staphylococcus</taxon>
    </lineage>
</organism>
<feature type="chain" id="PRO_0000074908" description="Sensor protein VraS">
    <location>
        <begin position="1"/>
        <end position="347"/>
    </location>
</feature>
<feature type="transmembrane region" description="Helical" evidence="2">
    <location>
        <begin position="13"/>
        <end position="33"/>
    </location>
</feature>
<feature type="transmembrane region" description="Helical" evidence="2">
    <location>
        <begin position="43"/>
        <end position="63"/>
    </location>
</feature>
<feature type="domain" description="Histidine kinase">
    <location>
        <begin position="150"/>
        <end position="341"/>
    </location>
</feature>